<gene>
    <name type="primary">kdc</name>
    <name type="ordered locus">Rv0853c</name>
</gene>
<evidence type="ECO:0000250" key="1"/>
<evidence type="ECO:0000269" key="2">
    <source>
    </source>
</evidence>
<evidence type="ECO:0000305" key="3"/>
<sequence length="560" mass="59783">MTPQKSDACSDPVYTVGDYLLDRLAELGVSEIFGVPGDYNLQFLDHIVAHPTIRWVGSANELNAGYAADGYGRLRGMSAVVTTFGVGELSVTNAIAGSYAEHVPVVHIVGGPTKDAQGTRRALHHSLGDGDFEHFLRISREITCAQANLMPATAGREIDRVLSEVREQKRPGYILLSSDVARFPTEPPAAPLPRYPGGTSPRALSLFTKAAIELIADHQLTVLADLLVHRLQAVKELEALLAADVVPHATLMWGKSLLDESSPNFLGIYAGAASAERVRAAIEGAPVLVTAGVVFTDMVSGFFSQRIDPARTIDIGQYQSSVADQVFAPLEMSAALQALATILTGRGISSPPVVPPPAEPPPAMPARDEPLTQQMVWDRVCSALTPGNVVLADQGTSFYGMADHRLPQGVTFIGQPLWGSIGYTLPAAVGAAVAHPDRRTVLLIGDGAAQLTVQELGTFSREGLSPVIVVVNNDGYTVERAIHGETAPYNDIVSWNWTELPSALGVTNHLAFRAQTYGQLDDALTVAAARRDRMVLVEVVLPRLEIPRLLGQLVGSMAPQ</sequence>
<reference key="1">
    <citation type="journal article" date="1998" name="Nature">
        <title>Deciphering the biology of Mycobacterium tuberculosis from the complete genome sequence.</title>
        <authorList>
            <person name="Cole S.T."/>
            <person name="Brosch R."/>
            <person name="Parkhill J."/>
            <person name="Garnier T."/>
            <person name="Churcher C.M."/>
            <person name="Harris D.E."/>
            <person name="Gordon S.V."/>
            <person name="Eiglmeier K."/>
            <person name="Gas S."/>
            <person name="Barry C.E. III"/>
            <person name="Tekaia F."/>
            <person name="Badcock K."/>
            <person name="Basham D."/>
            <person name="Brown D."/>
            <person name="Chillingworth T."/>
            <person name="Connor R."/>
            <person name="Davies R.M."/>
            <person name="Devlin K."/>
            <person name="Feltwell T."/>
            <person name="Gentles S."/>
            <person name="Hamlin N."/>
            <person name="Holroyd S."/>
            <person name="Hornsby T."/>
            <person name="Jagels K."/>
            <person name="Krogh A."/>
            <person name="McLean J."/>
            <person name="Moule S."/>
            <person name="Murphy L.D."/>
            <person name="Oliver S."/>
            <person name="Osborne J."/>
            <person name="Quail M.A."/>
            <person name="Rajandream M.A."/>
            <person name="Rogers J."/>
            <person name="Rutter S."/>
            <person name="Seeger K."/>
            <person name="Skelton S."/>
            <person name="Squares S."/>
            <person name="Squares R."/>
            <person name="Sulston J.E."/>
            <person name="Taylor K."/>
            <person name="Whitehead S."/>
            <person name="Barrell B.G."/>
        </authorList>
    </citation>
    <scope>NUCLEOTIDE SEQUENCE [LARGE SCALE GENOMIC DNA]</scope>
    <source>
        <strain>ATCC 25618 / H37Rv</strain>
    </source>
</reference>
<reference key="2">
    <citation type="journal article" date="2002" name="Microbiology">
        <title>Re-annotation of the genome sequence of Mycobacterium tuberculosis H37Rv.</title>
        <authorList>
            <person name="Camus J.-C."/>
            <person name="Pryor M.J."/>
            <person name="Medigue C."/>
            <person name="Cole S.T."/>
        </authorList>
    </citation>
    <scope>SEQUENCE REVISION</scope>
    <source>
        <strain>ATCC 25618 / H37Rv</strain>
    </source>
</reference>
<reference key="3">
    <citation type="journal article" date="2008" name="BMC Syst. Biol.">
        <title>targetTB: a target identification pipeline for Mycobacterium tuberculosis through an interactome, reactome and genome-scale structural analysis.</title>
        <authorList>
            <person name="Raman K."/>
            <person name="Yeturu K."/>
            <person name="Chandra N."/>
        </authorList>
    </citation>
    <scope>IDENTIFICATION AS A DRUG TARGET [LARGE SCALE ANALYSIS]</scope>
</reference>
<reference key="4">
    <citation type="journal article" date="2008" name="J. Biol. Chem.">
        <title>Amino acids allosterically regulate the thiamine diphosphate-dependent alpha-keto acid decarboxylase from Mycobacterium tuberculosis.</title>
        <authorList>
            <person name="Werther T."/>
            <person name="Spinka M."/>
            <person name="Tittmann K."/>
            <person name="Schuetz A."/>
            <person name="Golbik R."/>
            <person name="Mrestani-Klaus C."/>
            <person name="Huebner G."/>
            <person name="Koenig S."/>
        </authorList>
    </citation>
    <scope>FUNCTION AS AN ALPHA-KETO-ACID DECARBOXYLASE</scope>
    <scope>REGULATION</scope>
    <source>
        <strain>ATCC 25618 / H37Rv</strain>
    </source>
</reference>
<reference key="5">
    <citation type="journal article" date="2011" name="Mol. Cell. Proteomics">
        <title>Proteogenomic analysis of Mycobacterium tuberculosis by high resolution mass spectrometry.</title>
        <authorList>
            <person name="Kelkar D.S."/>
            <person name="Kumar D."/>
            <person name="Kumar P."/>
            <person name="Balakrishnan L."/>
            <person name="Muthusamy B."/>
            <person name="Yadav A.K."/>
            <person name="Shrivastava P."/>
            <person name="Marimuthu A."/>
            <person name="Anand S."/>
            <person name="Sundaram H."/>
            <person name="Kingsbury R."/>
            <person name="Harsha H.C."/>
            <person name="Nair B."/>
            <person name="Prasad T.S."/>
            <person name="Chauhan D.S."/>
            <person name="Katoch K."/>
            <person name="Katoch V.M."/>
            <person name="Kumar P."/>
            <person name="Chaerkady R."/>
            <person name="Ramachandran S."/>
            <person name="Dash D."/>
            <person name="Pandey A."/>
        </authorList>
    </citation>
    <scope>IDENTIFICATION BY MASS SPECTROMETRY [LARGE SCALE ANALYSIS]</scope>
    <source>
        <strain>ATCC 25618 / H37Rv</strain>
    </source>
</reference>
<keyword id="KW-0021">Allosteric enzyme</keyword>
<keyword id="KW-0210">Decarboxylase</keyword>
<keyword id="KW-0456">Lyase</keyword>
<keyword id="KW-0460">Magnesium</keyword>
<keyword id="KW-0479">Metal-binding</keyword>
<keyword id="KW-1185">Reference proteome</keyword>
<keyword id="KW-0786">Thiamine pyrophosphate</keyword>
<comment type="function">
    <text evidence="2">Decarboxylates branched-chain and aromatic alpha-keto acids to aldehydes.</text>
</comment>
<comment type="cofactor">
    <cofactor evidence="1">
        <name>a metal cation</name>
        <dbReference type="ChEBI" id="CHEBI:25213"/>
    </cofactor>
    <text evidence="1">Binds 1 metal ion per subunit.</text>
</comment>
<comment type="cofactor">
    <cofactor evidence="1">
        <name>thiamine diphosphate</name>
        <dbReference type="ChEBI" id="CHEBI:58937"/>
    </cofactor>
    <text evidence="1">Binds 1 thiamine pyrophosphate per subunit.</text>
</comment>
<comment type="activity regulation">
    <text>Allosterically activated by alpha-keto acids and the corresponding amino acids. L-leucine, L-valine, D-valine, L-isoleucine, L-phenylalanine, D-phenylalanine, L-tyrosine and L-valine are activators (with L-leucine and L-isoleucine being the strongest activators) whereas L-tryptophan, tryptophol, phenylacetic acid and indoleacetic acid have no effect.</text>
</comment>
<comment type="biophysicochemical properties">
    <kinetics>
        <KM>0.09 mM for indole pyruvate</KM>
        <KM>1.17 mM for phenyl pyruvate</KM>
        <KM>0.83 mM for alpha-keto caproate</KM>
        <KM>1.21 mM for alpha-keto valerate</KM>
        <KM>20.25 mM for alpha-keto-beta-methyl valerate</KM>
        <KM>26.11 mM for benzoylformate</KM>
        <KM>138.3 mM for alpha-keto-butyrate</KM>
        <KM>0.4 mM for pyruvate</KM>
        <text>Pyruvate is converted with the lowest catalytic efficiency and displays a weak substrate inhibition. The highest catalytic efficiencies are found for indolepyruvate and alpha-ketoisocaproate. The S0.5 values are 0.26 mM for indolepyruvate, 2.90 mM for alpha-ketoisocaproate, 0.83 mM for phenylpyruvate, 0.92 mM for alpha-ketocaproate, 1.31 mM for alpha-ketovalerate, 0.93 mM for 4-hydroxyphenylpyruvate, 6.68 mM for alpha-keto-beta-methylvalerate, 8.25 mM for benzoylformate, 5=14.17 mM for alpha-ketobutyrate, 24.47 mM for alpha-ketoisovalerate, 98.89 mM for pyruvate.</text>
    </kinetics>
</comment>
<comment type="miscellaneous">
    <text>Was identified as a high-confidence drug target.</text>
</comment>
<comment type="similarity">
    <text evidence="3">Belongs to the TPP enzyme family.</text>
</comment>
<protein>
    <recommendedName>
        <fullName>Alpha-keto-acid decarboxylase</fullName>
        <shortName>KDC</shortName>
        <ecNumber>4.1.1.-</ecNumber>
    </recommendedName>
</protein>
<name>KDC_MYCTU</name>
<organism>
    <name type="scientific">Mycobacterium tuberculosis (strain ATCC 25618 / H37Rv)</name>
    <dbReference type="NCBI Taxonomy" id="83332"/>
    <lineage>
        <taxon>Bacteria</taxon>
        <taxon>Bacillati</taxon>
        <taxon>Actinomycetota</taxon>
        <taxon>Actinomycetes</taxon>
        <taxon>Mycobacteriales</taxon>
        <taxon>Mycobacteriaceae</taxon>
        <taxon>Mycobacterium</taxon>
        <taxon>Mycobacterium tuberculosis complex</taxon>
    </lineage>
</organism>
<accession>P9WG37</accession>
<accession>L0T537</accession>
<accession>O53865</accession>
<accession>Q7D958</accession>
<proteinExistence type="evidence at protein level"/>
<feature type="chain" id="PRO_0000333751" description="Alpha-keto-acid decarboxylase">
    <location>
        <begin position="1"/>
        <end position="560"/>
    </location>
</feature>
<feature type="region of interest" description="Thiamine pyrophosphate binding" evidence="1">
    <location>
        <begin position="396"/>
        <end position="478"/>
    </location>
</feature>
<feature type="binding site" evidence="1">
    <location>
        <position position="61"/>
    </location>
    <ligand>
        <name>thiamine diphosphate</name>
        <dbReference type="ChEBI" id="CHEBI:58937"/>
    </ligand>
</feature>
<feature type="binding site" evidence="1">
    <location>
        <position position="446"/>
    </location>
    <ligand>
        <name>Mg(2+)</name>
        <dbReference type="ChEBI" id="CHEBI:18420"/>
    </ligand>
</feature>
<feature type="binding site" evidence="1">
    <location>
        <position position="473"/>
    </location>
    <ligand>
        <name>Mg(2+)</name>
        <dbReference type="ChEBI" id="CHEBI:18420"/>
    </ligand>
</feature>
<feature type="binding site" evidence="1">
    <location>
        <position position="475"/>
    </location>
    <ligand>
        <name>Mg(2+)</name>
        <dbReference type="ChEBI" id="CHEBI:18420"/>
    </ligand>
</feature>
<dbReference type="EC" id="4.1.1.-"/>
<dbReference type="EMBL" id="AL123456">
    <property type="protein sequence ID" value="CCP43601.1"/>
    <property type="molecule type" value="Genomic_DNA"/>
</dbReference>
<dbReference type="PIR" id="E70814">
    <property type="entry name" value="E70814"/>
</dbReference>
<dbReference type="SMR" id="P9WG37"/>
<dbReference type="FunCoup" id="P9WG37">
    <property type="interactions" value="7"/>
</dbReference>
<dbReference type="STRING" id="83332.Rv0853c"/>
<dbReference type="PaxDb" id="83332-Rv0853c"/>
<dbReference type="DNASU" id="885576"/>
<dbReference type="KEGG" id="mtu:Rv0853c"/>
<dbReference type="KEGG" id="mtv:RVBD_0853c"/>
<dbReference type="TubercuList" id="Rv0853c"/>
<dbReference type="eggNOG" id="COG3961">
    <property type="taxonomic scope" value="Bacteria"/>
</dbReference>
<dbReference type="InParanoid" id="P9WG37"/>
<dbReference type="OrthoDB" id="4959782at2"/>
<dbReference type="PhylomeDB" id="P9WG37"/>
<dbReference type="BRENDA" id="4.1.1.72">
    <property type="organism ID" value="3445"/>
</dbReference>
<dbReference type="Proteomes" id="UP000001584">
    <property type="component" value="Chromosome"/>
</dbReference>
<dbReference type="GO" id="GO:0005829">
    <property type="term" value="C:cytosol"/>
    <property type="evidence" value="ECO:0000318"/>
    <property type="project" value="GO_Central"/>
</dbReference>
<dbReference type="GO" id="GO:0005886">
    <property type="term" value="C:plasma membrane"/>
    <property type="evidence" value="ECO:0007005"/>
    <property type="project" value="MTBBASE"/>
</dbReference>
<dbReference type="GO" id="GO:0000287">
    <property type="term" value="F:magnesium ion binding"/>
    <property type="evidence" value="ECO:0007669"/>
    <property type="project" value="InterPro"/>
</dbReference>
<dbReference type="GO" id="GO:0004737">
    <property type="term" value="F:pyruvate decarboxylase activity"/>
    <property type="evidence" value="ECO:0000318"/>
    <property type="project" value="GO_Central"/>
</dbReference>
<dbReference type="GO" id="GO:0030976">
    <property type="term" value="F:thiamine pyrophosphate binding"/>
    <property type="evidence" value="ECO:0007669"/>
    <property type="project" value="InterPro"/>
</dbReference>
<dbReference type="GO" id="GO:0000949">
    <property type="term" value="P:aromatic amino acid family catabolic process to alcohol via Ehrlich pathway"/>
    <property type="evidence" value="ECO:0000318"/>
    <property type="project" value="GO_Central"/>
</dbReference>
<dbReference type="CDD" id="cd02005">
    <property type="entry name" value="TPP_PDC_IPDC"/>
    <property type="match status" value="1"/>
</dbReference>
<dbReference type="CDD" id="cd07038">
    <property type="entry name" value="TPP_PYR_PDC_IPDC_like"/>
    <property type="match status" value="1"/>
</dbReference>
<dbReference type="FunFam" id="3.40.50.1220:FF:000042">
    <property type="entry name" value="Alpha-keto-acid decarboxylase"/>
    <property type="match status" value="1"/>
</dbReference>
<dbReference type="FunFam" id="3.40.50.970:FF:000019">
    <property type="entry name" value="Pyruvate decarboxylase isozyme"/>
    <property type="match status" value="1"/>
</dbReference>
<dbReference type="FunFam" id="3.40.50.970:FF:000024">
    <property type="entry name" value="Pyruvate decarboxylase isozyme"/>
    <property type="match status" value="1"/>
</dbReference>
<dbReference type="Gene3D" id="3.40.50.970">
    <property type="match status" value="2"/>
</dbReference>
<dbReference type="Gene3D" id="3.40.50.1220">
    <property type="entry name" value="TPP-binding domain"/>
    <property type="match status" value="1"/>
</dbReference>
<dbReference type="InterPro" id="IPR029035">
    <property type="entry name" value="DHS-like_NAD/FAD-binding_dom"/>
</dbReference>
<dbReference type="InterPro" id="IPR012110">
    <property type="entry name" value="PDC/IPDC-like"/>
</dbReference>
<dbReference type="InterPro" id="IPR029061">
    <property type="entry name" value="THDP-binding"/>
</dbReference>
<dbReference type="InterPro" id="IPR012000">
    <property type="entry name" value="Thiamin_PyroP_enz_cen_dom"/>
</dbReference>
<dbReference type="InterPro" id="IPR012001">
    <property type="entry name" value="Thiamin_PyroP_enz_TPP-bd_dom"/>
</dbReference>
<dbReference type="InterPro" id="IPR000399">
    <property type="entry name" value="TPP-bd_CS"/>
</dbReference>
<dbReference type="InterPro" id="IPR011766">
    <property type="entry name" value="TPP_enzyme_TPP-bd"/>
</dbReference>
<dbReference type="InterPro" id="IPR047214">
    <property type="entry name" value="TPP_PDC_IPDC"/>
</dbReference>
<dbReference type="InterPro" id="IPR047213">
    <property type="entry name" value="TPP_PYR_PDC_IPDC-like"/>
</dbReference>
<dbReference type="PANTHER" id="PTHR43452">
    <property type="entry name" value="PYRUVATE DECARBOXYLASE"/>
    <property type="match status" value="1"/>
</dbReference>
<dbReference type="PANTHER" id="PTHR43452:SF30">
    <property type="entry name" value="PYRUVATE DECARBOXYLASE ISOZYME 1-RELATED"/>
    <property type="match status" value="1"/>
</dbReference>
<dbReference type="Pfam" id="PF02775">
    <property type="entry name" value="TPP_enzyme_C"/>
    <property type="match status" value="1"/>
</dbReference>
<dbReference type="Pfam" id="PF00205">
    <property type="entry name" value="TPP_enzyme_M"/>
    <property type="match status" value="1"/>
</dbReference>
<dbReference type="Pfam" id="PF02776">
    <property type="entry name" value="TPP_enzyme_N"/>
    <property type="match status" value="1"/>
</dbReference>
<dbReference type="PIRSF" id="PIRSF036565">
    <property type="entry name" value="Pyruvt_ip_decrb"/>
    <property type="match status" value="1"/>
</dbReference>
<dbReference type="SUPFAM" id="SSF52467">
    <property type="entry name" value="DHS-like NAD/FAD-binding domain"/>
    <property type="match status" value="1"/>
</dbReference>
<dbReference type="SUPFAM" id="SSF52518">
    <property type="entry name" value="Thiamin diphosphate-binding fold (THDP-binding)"/>
    <property type="match status" value="2"/>
</dbReference>
<dbReference type="PROSITE" id="PS00187">
    <property type="entry name" value="TPP_ENZYMES"/>
    <property type="match status" value="1"/>
</dbReference>